<reference key="1">
    <citation type="journal article" date="2003" name="Nat. Biotechnol.">
        <title>The genome sequence of the entomopathogenic bacterium Photorhabdus luminescens.</title>
        <authorList>
            <person name="Duchaud E."/>
            <person name="Rusniok C."/>
            <person name="Frangeul L."/>
            <person name="Buchrieser C."/>
            <person name="Givaudan A."/>
            <person name="Taourit S."/>
            <person name="Bocs S."/>
            <person name="Boursaux-Eude C."/>
            <person name="Chandler M."/>
            <person name="Charles J.-F."/>
            <person name="Dassa E."/>
            <person name="Derose R."/>
            <person name="Derzelle S."/>
            <person name="Freyssinet G."/>
            <person name="Gaudriault S."/>
            <person name="Medigue C."/>
            <person name="Lanois A."/>
            <person name="Powell K."/>
            <person name="Siguier P."/>
            <person name="Vincent R."/>
            <person name="Wingate V."/>
            <person name="Zouine M."/>
            <person name="Glaser P."/>
            <person name="Boemare N."/>
            <person name="Danchin A."/>
            <person name="Kunst F."/>
        </authorList>
    </citation>
    <scope>NUCLEOTIDE SEQUENCE [LARGE SCALE GENOMIC DNA]</scope>
    <source>
        <strain>DSM 15139 / CIP 105565 / TT01</strain>
    </source>
</reference>
<comment type="function">
    <text evidence="1">RNA chaperone that binds small regulatory RNA (sRNAs) and mRNAs to facilitate mRNA translational regulation in response to envelope stress, environmental stress and changes in metabolite concentrations. Also binds with high specificity to tRNAs.</text>
</comment>
<comment type="subunit">
    <text evidence="1">Homohexamer.</text>
</comment>
<comment type="similarity">
    <text evidence="1">Belongs to the Hfq family.</text>
</comment>
<feature type="chain" id="PRO_0000095604" description="RNA-binding protein Hfq">
    <location>
        <begin position="1"/>
        <end position="102"/>
    </location>
</feature>
<feature type="domain" description="Sm" evidence="2">
    <location>
        <begin position="9"/>
        <end position="68"/>
    </location>
</feature>
<feature type="region of interest" description="Disordered" evidence="3">
    <location>
        <begin position="65"/>
        <end position="102"/>
    </location>
</feature>
<feature type="compositionally biased region" description="Polar residues" evidence="3">
    <location>
        <begin position="93"/>
        <end position="102"/>
    </location>
</feature>
<keyword id="KW-1185">Reference proteome</keyword>
<keyword id="KW-0694">RNA-binding</keyword>
<keyword id="KW-0346">Stress response</keyword>
<gene>
    <name evidence="1" type="primary">hfq</name>
    <name type="ordered locus">plu4581</name>
</gene>
<name>HFQ_PHOLL</name>
<protein>
    <recommendedName>
        <fullName evidence="1">RNA-binding protein Hfq</fullName>
    </recommendedName>
</protein>
<accession>Q7MYU0</accession>
<sequence>MAKGQSLQDPFLNALRRERVPVSIYLVNGIKLQGQIESFDQFVILLKNTVSQMVYKHAISTVVPSRPVSHHSSNTSVGASVGNYHSGGVSAPAAQQESDGTE</sequence>
<proteinExistence type="inferred from homology"/>
<dbReference type="EMBL" id="BX571874">
    <property type="protein sequence ID" value="CAE16953.1"/>
    <property type="molecule type" value="Genomic_DNA"/>
</dbReference>
<dbReference type="RefSeq" id="WP_011148654.1">
    <property type="nucleotide sequence ID" value="NC_005126.1"/>
</dbReference>
<dbReference type="SMR" id="Q7MYU0"/>
<dbReference type="STRING" id="243265.plu4581"/>
<dbReference type="GeneID" id="88805043"/>
<dbReference type="KEGG" id="plu:plu4581"/>
<dbReference type="eggNOG" id="COG1923">
    <property type="taxonomic scope" value="Bacteria"/>
</dbReference>
<dbReference type="HOGENOM" id="CLU_113688_2_2_6"/>
<dbReference type="OrthoDB" id="9799751at2"/>
<dbReference type="Proteomes" id="UP000002514">
    <property type="component" value="Chromosome"/>
</dbReference>
<dbReference type="GO" id="GO:0005829">
    <property type="term" value="C:cytosol"/>
    <property type="evidence" value="ECO:0007669"/>
    <property type="project" value="TreeGrafter"/>
</dbReference>
<dbReference type="GO" id="GO:0003723">
    <property type="term" value="F:RNA binding"/>
    <property type="evidence" value="ECO:0007669"/>
    <property type="project" value="UniProtKB-UniRule"/>
</dbReference>
<dbReference type="GO" id="GO:0006355">
    <property type="term" value="P:regulation of DNA-templated transcription"/>
    <property type="evidence" value="ECO:0007669"/>
    <property type="project" value="InterPro"/>
</dbReference>
<dbReference type="GO" id="GO:0043487">
    <property type="term" value="P:regulation of RNA stability"/>
    <property type="evidence" value="ECO:0007669"/>
    <property type="project" value="TreeGrafter"/>
</dbReference>
<dbReference type="GO" id="GO:0045974">
    <property type="term" value="P:regulation of translation, ncRNA-mediated"/>
    <property type="evidence" value="ECO:0007669"/>
    <property type="project" value="TreeGrafter"/>
</dbReference>
<dbReference type="CDD" id="cd01716">
    <property type="entry name" value="Hfq"/>
    <property type="match status" value="1"/>
</dbReference>
<dbReference type="FunFam" id="2.30.30.100:FF:000001">
    <property type="entry name" value="RNA-binding protein Hfq"/>
    <property type="match status" value="1"/>
</dbReference>
<dbReference type="Gene3D" id="2.30.30.100">
    <property type="match status" value="1"/>
</dbReference>
<dbReference type="HAMAP" id="MF_00436">
    <property type="entry name" value="Hfq"/>
    <property type="match status" value="1"/>
</dbReference>
<dbReference type="InterPro" id="IPR005001">
    <property type="entry name" value="Hfq"/>
</dbReference>
<dbReference type="InterPro" id="IPR010920">
    <property type="entry name" value="LSM_dom_sf"/>
</dbReference>
<dbReference type="InterPro" id="IPR047575">
    <property type="entry name" value="Sm"/>
</dbReference>
<dbReference type="NCBIfam" id="TIGR02383">
    <property type="entry name" value="Hfq"/>
    <property type="match status" value="1"/>
</dbReference>
<dbReference type="NCBIfam" id="NF001602">
    <property type="entry name" value="PRK00395.1"/>
    <property type="match status" value="1"/>
</dbReference>
<dbReference type="PANTHER" id="PTHR34772">
    <property type="entry name" value="RNA-BINDING PROTEIN HFQ"/>
    <property type="match status" value="1"/>
</dbReference>
<dbReference type="PANTHER" id="PTHR34772:SF1">
    <property type="entry name" value="RNA-BINDING PROTEIN HFQ"/>
    <property type="match status" value="1"/>
</dbReference>
<dbReference type="Pfam" id="PF17209">
    <property type="entry name" value="Hfq"/>
    <property type="match status" value="1"/>
</dbReference>
<dbReference type="SUPFAM" id="SSF50182">
    <property type="entry name" value="Sm-like ribonucleoproteins"/>
    <property type="match status" value="1"/>
</dbReference>
<dbReference type="PROSITE" id="PS52002">
    <property type="entry name" value="SM"/>
    <property type="match status" value="1"/>
</dbReference>
<evidence type="ECO:0000255" key="1">
    <source>
        <dbReference type="HAMAP-Rule" id="MF_00436"/>
    </source>
</evidence>
<evidence type="ECO:0000255" key="2">
    <source>
        <dbReference type="PROSITE-ProRule" id="PRU01346"/>
    </source>
</evidence>
<evidence type="ECO:0000256" key="3">
    <source>
        <dbReference type="SAM" id="MobiDB-lite"/>
    </source>
</evidence>
<organism>
    <name type="scientific">Photorhabdus laumondii subsp. laumondii (strain DSM 15139 / CIP 105565 / TT01)</name>
    <name type="common">Photorhabdus luminescens subsp. laumondii</name>
    <dbReference type="NCBI Taxonomy" id="243265"/>
    <lineage>
        <taxon>Bacteria</taxon>
        <taxon>Pseudomonadati</taxon>
        <taxon>Pseudomonadota</taxon>
        <taxon>Gammaproteobacteria</taxon>
        <taxon>Enterobacterales</taxon>
        <taxon>Morganellaceae</taxon>
        <taxon>Photorhabdus</taxon>
    </lineage>
</organism>